<reference key="1">
    <citation type="journal article" date="1990" name="Virology">
        <title>The complete DNA sequence of vaccinia virus.</title>
        <authorList>
            <person name="Goebel S.J."/>
            <person name="Johnson G.P."/>
            <person name="Perkus M.E."/>
            <person name="Davis S.W."/>
            <person name="Winslow J.P."/>
            <person name="Paoletti E."/>
        </authorList>
    </citation>
    <scope>NUCLEOTIDE SEQUENCE [LARGE SCALE GENOMIC DNA]</scope>
</reference>
<reference key="2">
    <citation type="journal article" date="1990" name="Virology">
        <title>Appendix to 'The complete DNA sequence of vaccinia virus'.</title>
        <authorList>
            <person name="Goebel S.J."/>
            <person name="Johnson G.P."/>
            <person name="Perkus M.E."/>
            <person name="Davis S.W."/>
            <person name="Winslow J.P."/>
            <person name="Paoletti E."/>
        </authorList>
    </citation>
    <scope>COMPLETE GENOME</scope>
</reference>
<proteinExistence type="predicted"/>
<dbReference type="EMBL" id="M35027">
    <property type="protein sequence ID" value="AAA48119.1"/>
    <property type="molecule type" value="Genomic_DNA"/>
</dbReference>
<dbReference type="PIR" id="F42523">
    <property type="entry name" value="F42523"/>
</dbReference>
<dbReference type="Proteomes" id="UP000008269">
    <property type="component" value="Segment"/>
</dbReference>
<sequence length="119" mass="14087">MNSTTHHISSQWINVCNSRTSSISYVRRSEHHSSTIAIECHRINILGIDRNRTVGCCDHLHRINNDVWCRLKFHIVTDAVYRSSHRNQRRSKSNYRQNRSQYLFLICHNLRASSMNNLH</sequence>
<organism>
    <name type="scientific">Vaccinia virus (strain Copenhagen)</name>
    <name type="common">VACV</name>
    <dbReference type="NCBI Taxonomy" id="10249"/>
    <lineage>
        <taxon>Viruses</taxon>
        <taxon>Varidnaviria</taxon>
        <taxon>Bamfordvirae</taxon>
        <taxon>Nucleocytoviricota</taxon>
        <taxon>Pokkesviricetes</taxon>
        <taxon>Chitovirales</taxon>
        <taxon>Poxviridae</taxon>
        <taxon>Chordopoxvirinae</taxon>
        <taxon>Orthopoxvirus</taxon>
        <taxon>Vaccinia virus</taxon>
    </lineage>
</organism>
<feature type="chain" id="PRO_0000099642" description="Uncharacterized 14.1 kDa protein">
    <location>
        <begin position="1"/>
        <end position="119"/>
    </location>
</feature>
<name>YVAA_VACCC</name>
<organismHost>
    <name type="scientific">Homo sapiens</name>
    <name type="common">Human</name>
    <dbReference type="NCBI Taxonomy" id="9606"/>
</organismHost>
<gene>
    <name type="ORF">A ORF A</name>
</gene>
<keyword id="KW-1185">Reference proteome</keyword>
<accession>P20510</accession>
<protein>
    <recommendedName>
        <fullName>Uncharacterized 14.1 kDa protein</fullName>
    </recommendedName>
</protein>